<comment type="function">
    <text evidence="1">Catalyzes the interconversion of 2-phosphoglycerate and 3-phosphoglycerate.</text>
</comment>
<comment type="catalytic activity">
    <reaction evidence="1">
        <text>(2R)-2-phosphoglycerate = (2R)-3-phosphoglycerate</text>
        <dbReference type="Rhea" id="RHEA:15901"/>
        <dbReference type="ChEBI" id="CHEBI:58272"/>
        <dbReference type="ChEBI" id="CHEBI:58289"/>
        <dbReference type="EC" id="5.4.2.12"/>
    </reaction>
</comment>
<comment type="cofactor">
    <cofactor evidence="1">
        <name>Mn(2+)</name>
        <dbReference type="ChEBI" id="CHEBI:29035"/>
    </cofactor>
    <text evidence="1">Binds 2 manganese ions per subunit.</text>
</comment>
<comment type="pathway">
    <text evidence="1">Carbohydrate degradation; glycolysis; pyruvate from D-glyceraldehyde 3-phosphate: step 3/5.</text>
</comment>
<comment type="subunit">
    <text evidence="1">Monomer.</text>
</comment>
<comment type="similarity">
    <text evidence="1">Belongs to the BPG-independent phosphoglycerate mutase family.</text>
</comment>
<reference key="1">
    <citation type="journal article" date="1997" name="Nature">
        <title>The complete genome sequence of the gastric pathogen Helicobacter pylori.</title>
        <authorList>
            <person name="Tomb J.-F."/>
            <person name="White O."/>
            <person name="Kerlavage A.R."/>
            <person name="Clayton R.A."/>
            <person name="Sutton G.G."/>
            <person name="Fleischmann R.D."/>
            <person name="Ketchum K.A."/>
            <person name="Klenk H.-P."/>
            <person name="Gill S.R."/>
            <person name="Dougherty B.A."/>
            <person name="Nelson K.E."/>
            <person name="Quackenbush J."/>
            <person name="Zhou L."/>
            <person name="Kirkness E.F."/>
            <person name="Peterson S.N."/>
            <person name="Loftus B.J."/>
            <person name="Richardson D.L."/>
            <person name="Dodson R.J."/>
            <person name="Khalak H.G."/>
            <person name="Glodek A."/>
            <person name="McKenney K."/>
            <person name="FitzGerald L.M."/>
            <person name="Lee N."/>
            <person name="Adams M.D."/>
            <person name="Hickey E.K."/>
            <person name="Berg D.E."/>
            <person name="Gocayne J.D."/>
            <person name="Utterback T.R."/>
            <person name="Peterson J.D."/>
            <person name="Kelley J.M."/>
            <person name="Cotton M.D."/>
            <person name="Weidman J.F."/>
            <person name="Fujii C."/>
            <person name="Bowman C."/>
            <person name="Watthey L."/>
            <person name="Wallin E."/>
            <person name="Hayes W.S."/>
            <person name="Borodovsky M."/>
            <person name="Karp P.D."/>
            <person name="Smith H.O."/>
            <person name="Fraser C.M."/>
            <person name="Venter J.C."/>
        </authorList>
    </citation>
    <scope>NUCLEOTIDE SEQUENCE [LARGE SCALE GENOMIC DNA]</scope>
    <source>
        <strain>ATCC 700392 / 26695</strain>
    </source>
</reference>
<keyword id="KW-0324">Glycolysis</keyword>
<keyword id="KW-0413">Isomerase</keyword>
<keyword id="KW-0464">Manganese</keyword>
<keyword id="KW-0479">Metal-binding</keyword>
<keyword id="KW-1185">Reference proteome</keyword>
<sequence>MAQKTLLIITDGIGYRKDSDHNAFFHAKKPTYDLMFKTLPYSLIDTHGLSVGLPKGQMGNSEVGHMCIGAGRVLYQDLVKISLSLQNDELKNNPAFLNTIQKSPVVHLMGLMSDGGVHSHIEHFIALALECEKSHKKVCLHLITDGRDVAPKSALTYLKQMQNICNESIQIATISGRFYAMDRDKRFERIELAYHSLMGLNHTPLSPSEYIQSQYDKNITDEFIMPACFKNYCGMQDDESFIFINFRNDRAREIVSALGQKQFSGFKRQVFKKLHIATMTPYDNTFPYPVLFPKESVQNTLAEVVSQHNLTQSHIAETEKYAHVTFFINGGVETPFKNENRVLIQSPKVTTYDLKPEMSAKEVTLAVLEQMKLGTDLIIVNFANGDMVGHTGNFEASVKAVEAVDACLGEILSLAKKLDYAMLLTSDHGNCERMKDENQNPLTNHTAGSVYCFVLGDGVKSIKNGALNNIASSVLKLMGLKAPATMDEPLF</sequence>
<gene>
    <name evidence="1" type="primary">gpmI</name>
    <name type="synonym">pgm</name>
    <name type="ordered locus">HP_0974</name>
</gene>
<protein>
    <recommendedName>
        <fullName evidence="1">2,3-bisphosphoglycerate-independent phosphoglycerate mutase</fullName>
        <shortName evidence="1">BPG-independent PGAM</shortName>
        <shortName evidence="1">Phosphoglyceromutase</shortName>
        <shortName evidence="1">iPGM</shortName>
        <ecNumber evidence="1">5.4.2.12</ecNumber>
    </recommendedName>
</protein>
<proteinExistence type="inferred from homology"/>
<name>GPMI_HELPY</name>
<evidence type="ECO:0000255" key="1">
    <source>
        <dbReference type="HAMAP-Rule" id="MF_01038"/>
    </source>
</evidence>
<accession>P56196</accession>
<dbReference type="EC" id="5.4.2.12" evidence="1"/>
<dbReference type="EMBL" id="AE000511">
    <property type="protein sequence ID" value="AAD08020.1"/>
    <property type="molecule type" value="Genomic_DNA"/>
</dbReference>
<dbReference type="PIR" id="F64641">
    <property type="entry name" value="F64641"/>
</dbReference>
<dbReference type="RefSeq" id="NP_207765.1">
    <property type="nucleotide sequence ID" value="NC_000915.1"/>
</dbReference>
<dbReference type="RefSeq" id="WP_000057737.1">
    <property type="nucleotide sequence ID" value="NC_018939.1"/>
</dbReference>
<dbReference type="SMR" id="P56196"/>
<dbReference type="DIP" id="DIP-3166N"/>
<dbReference type="FunCoup" id="P56196">
    <property type="interactions" value="284"/>
</dbReference>
<dbReference type="IntAct" id="P56196">
    <property type="interactions" value="1"/>
</dbReference>
<dbReference type="MINT" id="P56196"/>
<dbReference type="STRING" id="85962.HP_0974"/>
<dbReference type="PaxDb" id="85962-C694_05010"/>
<dbReference type="EnsemblBacteria" id="AAD08020">
    <property type="protein sequence ID" value="AAD08020"/>
    <property type="gene ID" value="HP_0974"/>
</dbReference>
<dbReference type="KEGG" id="heo:C694_05010"/>
<dbReference type="KEGG" id="hpy:HP_0974"/>
<dbReference type="PATRIC" id="fig|85962.47.peg.1042"/>
<dbReference type="eggNOG" id="COG0696">
    <property type="taxonomic scope" value="Bacteria"/>
</dbReference>
<dbReference type="InParanoid" id="P56196"/>
<dbReference type="OrthoDB" id="9800863at2"/>
<dbReference type="PhylomeDB" id="P56196"/>
<dbReference type="UniPathway" id="UPA00109">
    <property type="reaction ID" value="UER00186"/>
</dbReference>
<dbReference type="Proteomes" id="UP000000429">
    <property type="component" value="Chromosome"/>
</dbReference>
<dbReference type="GO" id="GO:0005829">
    <property type="term" value="C:cytosol"/>
    <property type="evidence" value="ECO:0000318"/>
    <property type="project" value="GO_Central"/>
</dbReference>
<dbReference type="GO" id="GO:0030145">
    <property type="term" value="F:manganese ion binding"/>
    <property type="evidence" value="ECO:0000318"/>
    <property type="project" value="GO_Central"/>
</dbReference>
<dbReference type="GO" id="GO:0004619">
    <property type="term" value="F:phosphoglycerate mutase activity"/>
    <property type="evidence" value="ECO:0000318"/>
    <property type="project" value="GO_Central"/>
</dbReference>
<dbReference type="GO" id="GO:0005975">
    <property type="term" value="P:carbohydrate metabolic process"/>
    <property type="evidence" value="ECO:0000318"/>
    <property type="project" value="GO_Central"/>
</dbReference>
<dbReference type="GO" id="GO:0006007">
    <property type="term" value="P:glucose catabolic process"/>
    <property type="evidence" value="ECO:0007669"/>
    <property type="project" value="InterPro"/>
</dbReference>
<dbReference type="GO" id="GO:0006096">
    <property type="term" value="P:glycolytic process"/>
    <property type="evidence" value="ECO:0007669"/>
    <property type="project" value="UniProtKB-UniRule"/>
</dbReference>
<dbReference type="CDD" id="cd16010">
    <property type="entry name" value="iPGM"/>
    <property type="match status" value="1"/>
</dbReference>
<dbReference type="FunFam" id="3.40.1450.10:FF:000002">
    <property type="entry name" value="2,3-bisphosphoglycerate-independent phosphoglycerate mutase"/>
    <property type="match status" value="1"/>
</dbReference>
<dbReference type="Gene3D" id="3.40.720.10">
    <property type="entry name" value="Alkaline Phosphatase, subunit A"/>
    <property type="match status" value="1"/>
</dbReference>
<dbReference type="Gene3D" id="3.40.1450.10">
    <property type="entry name" value="BPG-independent phosphoglycerate mutase, domain B"/>
    <property type="match status" value="1"/>
</dbReference>
<dbReference type="HAMAP" id="MF_01038">
    <property type="entry name" value="GpmI"/>
    <property type="match status" value="1"/>
</dbReference>
<dbReference type="InterPro" id="IPR017850">
    <property type="entry name" value="Alkaline_phosphatase_core_sf"/>
</dbReference>
<dbReference type="InterPro" id="IPR011258">
    <property type="entry name" value="BPG-indep_PGM_N"/>
</dbReference>
<dbReference type="InterPro" id="IPR006124">
    <property type="entry name" value="Metalloenzyme"/>
</dbReference>
<dbReference type="InterPro" id="IPR036646">
    <property type="entry name" value="PGAM_B_sf"/>
</dbReference>
<dbReference type="InterPro" id="IPR005995">
    <property type="entry name" value="Pgm_bpd_ind"/>
</dbReference>
<dbReference type="NCBIfam" id="TIGR01307">
    <property type="entry name" value="pgm_bpd_ind"/>
    <property type="match status" value="1"/>
</dbReference>
<dbReference type="PANTHER" id="PTHR31637">
    <property type="entry name" value="2,3-BISPHOSPHOGLYCERATE-INDEPENDENT PHOSPHOGLYCERATE MUTASE"/>
    <property type="match status" value="1"/>
</dbReference>
<dbReference type="PANTHER" id="PTHR31637:SF0">
    <property type="entry name" value="2,3-BISPHOSPHOGLYCERATE-INDEPENDENT PHOSPHOGLYCERATE MUTASE"/>
    <property type="match status" value="1"/>
</dbReference>
<dbReference type="Pfam" id="PF06415">
    <property type="entry name" value="iPGM_N"/>
    <property type="match status" value="1"/>
</dbReference>
<dbReference type="Pfam" id="PF01676">
    <property type="entry name" value="Metalloenzyme"/>
    <property type="match status" value="1"/>
</dbReference>
<dbReference type="PIRSF" id="PIRSF001492">
    <property type="entry name" value="IPGAM"/>
    <property type="match status" value="1"/>
</dbReference>
<dbReference type="SUPFAM" id="SSF64158">
    <property type="entry name" value="2,3-Bisphosphoglycerate-independent phosphoglycerate mutase, substrate-binding domain"/>
    <property type="match status" value="1"/>
</dbReference>
<dbReference type="SUPFAM" id="SSF53649">
    <property type="entry name" value="Alkaline phosphatase-like"/>
    <property type="match status" value="1"/>
</dbReference>
<feature type="chain" id="PRO_0000212154" description="2,3-bisphosphoglycerate-independent phosphoglycerate mutase">
    <location>
        <begin position="1"/>
        <end position="491"/>
    </location>
</feature>
<feature type="active site" description="Phosphoserine intermediate" evidence="1">
    <location>
        <position position="61"/>
    </location>
</feature>
<feature type="binding site" evidence="1">
    <location>
        <position position="11"/>
    </location>
    <ligand>
        <name>Mn(2+)</name>
        <dbReference type="ChEBI" id="CHEBI:29035"/>
        <label>2</label>
    </ligand>
</feature>
<feature type="binding site" evidence="1">
    <location>
        <position position="61"/>
    </location>
    <ligand>
        <name>Mn(2+)</name>
        <dbReference type="ChEBI" id="CHEBI:29035"/>
        <label>2</label>
    </ligand>
</feature>
<feature type="binding site" evidence="1">
    <location>
        <position position="118"/>
    </location>
    <ligand>
        <name>substrate</name>
    </ligand>
</feature>
<feature type="binding site" evidence="1">
    <location>
        <begin position="147"/>
        <end position="148"/>
    </location>
    <ligand>
        <name>substrate</name>
    </ligand>
</feature>
<feature type="binding site" evidence="1">
    <location>
        <position position="177"/>
    </location>
    <ligand>
        <name>substrate</name>
    </ligand>
</feature>
<feature type="binding site" evidence="1">
    <location>
        <position position="183"/>
    </location>
    <ligand>
        <name>substrate</name>
    </ligand>
</feature>
<feature type="binding site" evidence="1">
    <location>
        <begin position="247"/>
        <end position="250"/>
    </location>
    <ligand>
        <name>substrate</name>
    </ligand>
</feature>
<feature type="binding site" evidence="1">
    <location>
        <position position="320"/>
    </location>
    <ligand>
        <name>substrate</name>
    </ligand>
</feature>
<feature type="binding site" evidence="1">
    <location>
        <position position="386"/>
    </location>
    <ligand>
        <name>Mn(2+)</name>
        <dbReference type="ChEBI" id="CHEBI:29035"/>
        <label>1</label>
    </ligand>
</feature>
<feature type="binding site" evidence="1">
    <location>
        <position position="390"/>
    </location>
    <ligand>
        <name>Mn(2+)</name>
        <dbReference type="ChEBI" id="CHEBI:29035"/>
        <label>1</label>
    </ligand>
</feature>
<feature type="binding site" evidence="1">
    <location>
        <position position="427"/>
    </location>
    <ligand>
        <name>Mn(2+)</name>
        <dbReference type="ChEBI" id="CHEBI:29035"/>
        <label>2</label>
    </ligand>
</feature>
<feature type="binding site" evidence="1">
    <location>
        <position position="428"/>
    </location>
    <ligand>
        <name>Mn(2+)</name>
        <dbReference type="ChEBI" id="CHEBI:29035"/>
        <label>2</label>
    </ligand>
</feature>
<feature type="binding site" evidence="1">
    <location>
        <position position="445"/>
    </location>
    <ligand>
        <name>Mn(2+)</name>
        <dbReference type="ChEBI" id="CHEBI:29035"/>
        <label>1</label>
    </ligand>
</feature>
<organism>
    <name type="scientific">Helicobacter pylori (strain ATCC 700392 / 26695)</name>
    <name type="common">Campylobacter pylori</name>
    <dbReference type="NCBI Taxonomy" id="85962"/>
    <lineage>
        <taxon>Bacteria</taxon>
        <taxon>Pseudomonadati</taxon>
        <taxon>Campylobacterota</taxon>
        <taxon>Epsilonproteobacteria</taxon>
        <taxon>Campylobacterales</taxon>
        <taxon>Helicobacteraceae</taxon>
        <taxon>Helicobacter</taxon>
    </lineage>
</organism>